<comment type="function">
    <text evidence="1">Major role in the synthesis of nucleoside triphosphates other than ATP. The ATP gamma phosphate is transferred to the NDP beta phosphate via a ping-pong mechanism, using a phosphorylated active-site intermediate.</text>
</comment>
<comment type="catalytic activity">
    <reaction evidence="1">
        <text>a 2'-deoxyribonucleoside 5'-diphosphate + ATP = a 2'-deoxyribonucleoside 5'-triphosphate + ADP</text>
        <dbReference type="Rhea" id="RHEA:44640"/>
        <dbReference type="ChEBI" id="CHEBI:30616"/>
        <dbReference type="ChEBI" id="CHEBI:61560"/>
        <dbReference type="ChEBI" id="CHEBI:73316"/>
        <dbReference type="ChEBI" id="CHEBI:456216"/>
        <dbReference type="EC" id="2.7.4.6"/>
    </reaction>
</comment>
<comment type="catalytic activity">
    <reaction evidence="1">
        <text>a ribonucleoside 5'-diphosphate + ATP = a ribonucleoside 5'-triphosphate + ADP</text>
        <dbReference type="Rhea" id="RHEA:18113"/>
        <dbReference type="ChEBI" id="CHEBI:30616"/>
        <dbReference type="ChEBI" id="CHEBI:57930"/>
        <dbReference type="ChEBI" id="CHEBI:61557"/>
        <dbReference type="ChEBI" id="CHEBI:456216"/>
        <dbReference type="EC" id="2.7.4.6"/>
    </reaction>
</comment>
<comment type="cofactor">
    <cofactor evidence="1">
        <name>Mg(2+)</name>
        <dbReference type="ChEBI" id="CHEBI:18420"/>
    </cofactor>
</comment>
<comment type="subunit">
    <text evidence="1">Homotetramer.</text>
</comment>
<comment type="subcellular location">
    <subcellularLocation>
        <location evidence="1">Cytoplasm</location>
    </subcellularLocation>
</comment>
<comment type="similarity">
    <text evidence="1">Belongs to the NDK family.</text>
</comment>
<accession>Q92QX9</accession>
<proteinExistence type="inferred from homology"/>
<feature type="chain" id="PRO_0000137029" description="Nucleoside diphosphate kinase">
    <location>
        <begin position="1"/>
        <end position="140"/>
    </location>
</feature>
<feature type="active site" description="Pros-phosphohistidine intermediate" evidence="1">
    <location>
        <position position="117"/>
    </location>
</feature>
<feature type="binding site" evidence="1">
    <location>
        <position position="11"/>
    </location>
    <ligand>
        <name>ATP</name>
        <dbReference type="ChEBI" id="CHEBI:30616"/>
    </ligand>
</feature>
<feature type="binding site" evidence="1">
    <location>
        <position position="59"/>
    </location>
    <ligand>
        <name>ATP</name>
        <dbReference type="ChEBI" id="CHEBI:30616"/>
    </ligand>
</feature>
<feature type="binding site" evidence="1">
    <location>
        <position position="87"/>
    </location>
    <ligand>
        <name>ATP</name>
        <dbReference type="ChEBI" id="CHEBI:30616"/>
    </ligand>
</feature>
<feature type="binding site" evidence="1">
    <location>
        <position position="93"/>
    </location>
    <ligand>
        <name>ATP</name>
        <dbReference type="ChEBI" id="CHEBI:30616"/>
    </ligand>
</feature>
<feature type="binding site" evidence="1">
    <location>
        <position position="104"/>
    </location>
    <ligand>
        <name>ATP</name>
        <dbReference type="ChEBI" id="CHEBI:30616"/>
    </ligand>
</feature>
<feature type="binding site" evidence="1">
    <location>
        <position position="114"/>
    </location>
    <ligand>
        <name>ATP</name>
        <dbReference type="ChEBI" id="CHEBI:30616"/>
    </ligand>
</feature>
<name>NDK_RHIME</name>
<gene>
    <name evidence="1" type="primary">ndk</name>
    <name type="ordered locus">R01164</name>
    <name type="ORF">SMc00595</name>
</gene>
<keyword id="KW-0067">ATP-binding</keyword>
<keyword id="KW-0963">Cytoplasm</keyword>
<keyword id="KW-0418">Kinase</keyword>
<keyword id="KW-0460">Magnesium</keyword>
<keyword id="KW-0479">Metal-binding</keyword>
<keyword id="KW-0546">Nucleotide metabolism</keyword>
<keyword id="KW-0547">Nucleotide-binding</keyword>
<keyword id="KW-0597">Phosphoprotein</keyword>
<keyword id="KW-1185">Reference proteome</keyword>
<keyword id="KW-0808">Transferase</keyword>
<organism>
    <name type="scientific">Rhizobium meliloti (strain 1021)</name>
    <name type="common">Ensifer meliloti</name>
    <name type="synonym">Sinorhizobium meliloti</name>
    <dbReference type="NCBI Taxonomy" id="266834"/>
    <lineage>
        <taxon>Bacteria</taxon>
        <taxon>Pseudomonadati</taxon>
        <taxon>Pseudomonadota</taxon>
        <taxon>Alphaproteobacteria</taxon>
        <taxon>Hyphomicrobiales</taxon>
        <taxon>Rhizobiaceae</taxon>
        <taxon>Sinorhizobium/Ensifer group</taxon>
        <taxon>Sinorhizobium</taxon>
    </lineage>
</organism>
<reference key="1">
    <citation type="journal article" date="2001" name="Proc. Natl. Acad. Sci. U.S.A.">
        <title>Analysis of the chromosome sequence of the legume symbiont Sinorhizobium meliloti strain 1021.</title>
        <authorList>
            <person name="Capela D."/>
            <person name="Barloy-Hubler F."/>
            <person name="Gouzy J."/>
            <person name="Bothe G."/>
            <person name="Ampe F."/>
            <person name="Batut J."/>
            <person name="Boistard P."/>
            <person name="Becker A."/>
            <person name="Boutry M."/>
            <person name="Cadieu E."/>
            <person name="Dreano S."/>
            <person name="Gloux S."/>
            <person name="Godrie T."/>
            <person name="Goffeau A."/>
            <person name="Kahn D."/>
            <person name="Kiss E."/>
            <person name="Lelaure V."/>
            <person name="Masuy D."/>
            <person name="Pohl T."/>
            <person name="Portetelle D."/>
            <person name="Puehler A."/>
            <person name="Purnelle B."/>
            <person name="Ramsperger U."/>
            <person name="Renard C."/>
            <person name="Thebault P."/>
            <person name="Vandenbol M."/>
            <person name="Weidner S."/>
            <person name="Galibert F."/>
        </authorList>
    </citation>
    <scope>NUCLEOTIDE SEQUENCE [LARGE SCALE GENOMIC DNA]</scope>
    <source>
        <strain>1021</strain>
    </source>
</reference>
<reference key="2">
    <citation type="journal article" date="2001" name="Science">
        <title>The composite genome of the legume symbiont Sinorhizobium meliloti.</title>
        <authorList>
            <person name="Galibert F."/>
            <person name="Finan T.M."/>
            <person name="Long S.R."/>
            <person name="Puehler A."/>
            <person name="Abola P."/>
            <person name="Ampe F."/>
            <person name="Barloy-Hubler F."/>
            <person name="Barnett M.J."/>
            <person name="Becker A."/>
            <person name="Boistard P."/>
            <person name="Bothe G."/>
            <person name="Boutry M."/>
            <person name="Bowser L."/>
            <person name="Buhrmester J."/>
            <person name="Cadieu E."/>
            <person name="Capela D."/>
            <person name="Chain P."/>
            <person name="Cowie A."/>
            <person name="Davis R.W."/>
            <person name="Dreano S."/>
            <person name="Federspiel N.A."/>
            <person name="Fisher R.F."/>
            <person name="Gloux S."/>
            <person name="Godrie T."/>
            <person name="Goffeau A."/>
            <person name="Golding B."/>
            <person name="Gouzy J."/>
            <person name="Gurjal M."/>
            <person name="Hernandez-Lucas I."/>
            <person name="Hong A."/>
            <person name="Huizar L."/>
            <person name="Hyman R.W."/>
            <person name="Jones T."/>
            <person name="Kahn D."/>
            <person name="Kahn M.L."/>
            <person name="Kalman S."/>
            <person name="Keating D.H."/>
            <person name="Kiss E."/>
            <person name="Komp C."/>
            <person name="Lelaure V."/>
            <person name="Masuy D."/>
            <person name="Palm C."/>
            <person name="Peck M.C."/>
            <person name="Pohl T.M."/>
            <person name="Portetelle D."/>
            <person name="Purnelle B."/>
            <person name="Ramsperger U."/>
            <person name="Surzycki R."/>
            <person name="Thebault P."/>
            <person name="Vandenbol M."/>
            <person name="Vorhoelter F.J."/>
            <person name="Weidner S."/>
            <person name="Wells D.H."/>
            <person name="Wong K."/>
            <person name="Yeh K.-C."/>
            <person name="Batut J."/>
        </authorList>
    </citation>
    <scope>NUCLEOTIDE SEQUENCE [LARGE SCALE GENOMIC DNA]</scope>
    <source>
        <strain>1021</strain>
    </source>
</reference>
<dbReference type="EC" id="2.7.4.6" evidence="1"/>
<dbReference type="EMBL" id="AL591688">
    <property type="protein sequence ID" value="CAC45743.1"/>
    <property type="molecule type" value="Genomic_DNA"/>
</dbReference>
<dbReference type="RefSeq" id="NP_385270.1">
    <property type="nucleotide sequence ID" value="NC_003047.1"/>
</dbReference>
<dbReference type="RefSeq" id="WP_003531616.1">
    <property type="nucleotide sequence ID" value="NC_003047.1"/>
</dbReference>
<dbReference type="SMR" id="Q92QX9"/>
<dbReference type="EnsemblBacteria" id="CAC45743">
    <property type="protein sequence ID" value="CAC45743"/>
    <property type="gene ID" value="SMc00595"/>
</dbReference>
<dbReference type="GeneID" id="89575487"/>
<dbReference type="KEGG" id="sme:SMc00595"/>
<dbReference type="PATRIC" id="fig|266834.11.peg.2574"/>
<dbReference type="eggNOG" id="COG0105">
    <property type="taxonomic scope" value="Bacteria"/>
</dbReference>
<dbReference type="HOGENOM" id="CLU_060216_8_1_5"/>
<dbReference type="OrthoDB" id="9801161at2"/>
<dbReference type="Proteomes" id="UP000001976">
    <property type="component" value="Chromosome"/>
</dbReference>
<dbReference type="GO" id="GO:0005737">
    <property type="term" value="C:cytoplasm"/>
    <property type="evidence" value="ECO:0007669"/>
    <property type="project" value="UniProtKB-SubCell"/>
</dbReference>
<dbReference type="GO" id="GO:0005524">
    <property type="term" value="F:ATP binding"/>
    <property type="evidence" value="ECO:0007669"/>
    <property type="project" value="UniProtKB-UniRule"/>
</dbReference>
<dbReference type="GO" id="GO:0046872">
    <property type="term" value="F:metal ion binding"/>
    <property type="evidence" value="ECO:0007669"/>
    <property type="project" value="UniProtKB-KW"/>
</dbReference>
<dbReference type="GO" id="GO:0004550">
    <property type="term" value="F:nucleoside diphosphate kinase activity"/>
    <property type="evidence" value="ECO:0007669"/>
    <property type="project" value="UniProtKB-UniRule"/>
</dbReference>
<dbReference type="GO" id="GO:0006241">
    <property type="term" value="P:CTP biosynthetic process"/>
    <property type="evidence" value="ECO:0007669"/>
    <property type="project" value="UniProtKB-UniRule"/>
</dbReference>
<dbReference type="GO" id="GO:0006183">
    <property type="term" value="P:GTP biosynthetic process"/>
    <property type="evidence" value="ECO:0007669"/>
    <property type="project" value="UniProtKB-UniRule"/>
</dbReference>
<dbReference type="GO" id="GO:0006228">
    <property type="term" value="P:UTP biosynthetic process"/>
    <property type="evidence" value="ECO:0007669"/>
    <property type="project" value="UniProtKB-UniRule"/>
</dbReference>
<dbReference type="CDD" id="cd04413">
    <property type="entry name" value="NDPk_I"/>
    <property type="match status" value="1"/>
</dbReference>
<dbReference type="FunFam" id="3.30.70.141:FF:000003">
    <property type="entry name" value="Nucleoside diphosphate kinase"/>
    <property type="match status" value="1"/>
</dbReference>
<dbReference type="Gene3D" id="3.30.70.141">
    <property type="entry name" value="Nucleoside diphosphate kinase-like domain"/>
    <property type="match status" value="1"/>
</dbReference>
<dbReference type="HAMAP" id="MF_00451">
    <property type="entry name" value="NDP_kinase"/>
    <property type="match status" value="1"/>
</dbReference>
<dbReference type="InterPro" id="IPR034907">
    <property type="entry name" value="NDK-like_dom"/>
</dbReference>
<dbReference type="InterPro" id="IPR036850">
    <property type="entry name" value="NDK-like_dom_sf"/>
</dbReference>
<dbReference type="InterPro" id="IPR001564">
    <property type="entry name" value="Nucleoside_diP_kinase"/>
</dbReference>
<dbReference type="InterPro" id="IPR023005">
    <property type="entry name" value="Nucleoside_diP_kinase_AS"/>
</dbReference>
<dbReference type="NCBIfam" id="NF001908">
    <property type="entry name" value="PRK00668.1"/>
    <property type="match status" value="1"/>
</dbReference>
<dbReference type="PANTHER" id="PTHR11349">
    <property type="entry name" value="NUCLEOSIDE DIPHOSPHATE KINASE"/>
    <property type="match status" value="1"/>
</dbReference>
<dbReference type="Pfam" id="PF00334">
    <property type="entry name" value="NDK"/>
    <property type="match status" value="1"/>
</dbReference>
<dbReference type="PRINTS" id="PR01243">
    <property type="entry name" value="NUCDPKINASE"/>
</dbReference>
<dbReference type="SMART" id="SM00562">
    <property type="entry name" value="NDK"/>
    <property type="match status" value="1"/>
</dbReference>
<dbReference type="SUPFAM" id="SSF54919">
    <property type="entry name" value="Nucleoside diphosphate kinase, NDK"/>
    <property type="match status" value="1"/>
</dbReference>
<dbReference type="PROSITE" id="PS00469">
    <property type="entry name" value="NDPK"/>
    <property type="match status" value="1"/>
</dbReference>
<dbReference type="PROSITE" id="PS51374">
    <property type="entry name" value="NDPK_LIKE"/>
    <property type="match status" value="1"/>
</dbReference>
<protein>
    <recommendedName>
        <fullName evidence="1">Nucleoside diphosphate kinase</fullName>
        <shortName evidence="1">NDK</shortName>
        <shortName evidence="1">NDP kinase</shortName>
        <ecNumber evidence="1">2.7.4.6</ecNumber>
    </recommendedName>
    <alternativeName>
        <fullName evidence="1">Nucleoside-2-P kinase</fullName>
    </alternativeName>
</protein>
<evidence type="ECO:0000255" key="1">
    <source>
        <dbReference type="HAMAP-Rule" id="MF_00451"/>
    </source>
</evidence>
<sequence length="140" mass="15242">MAIERTFSMIKPDATKRNLTGAITKMLEDAGLRVVASKRVWMSRREAEGFYAVHKERPFFGELVEFMSSGPTVVQVLEGENAIAKNREVMGATNPANAAEGTIRKVHALSIGENSVHGSDAPETAAEEIAYWFSGTEIVG</sequence>